<accession>Q4KYY3</accession>
<gene>
    <name type="primary">GAPDH</name>
    <name type="synonym">GAPD</name>
</gene>
<feature type="chain" id="PRO_0000250502" description="Glyceraldehyde-3-phosphate dehydrogenase">
    <location>
        <begin position="1"/>
        <end position="333"/>
    </location>
</feature>
<feature type="region of interest" description="Interaction with WARS1" evidence="1">
    <location>
        <begin position="1"/>
        <end position="146"/>
    </location>
</feature>
<feature type="short sequence motif" description="[IL]-x-C-x-x-[DE] motif" evidence="1">
    <location>
        <begin position="243"/>
        <end position="248"/>
    </location>
</feature>
<feature type="active site" description="Nucleophile" evidence="6">
    <location>
        <position position="150"/>
    </location>
</feature>
<feature type="binding site" evidence="1">
    <location>
        <begin position="11"/>
        <end position="12"/>
    </location>
    <ligand>
        <name>NAD(+)</name>
        <dbReference type="ChEBI" id="CHEBI:57540"/>
    </ligand>
</feature>
<feature type="binding site" evidence="1">
    <location>
        <position position="33"/>
    </location>
    <ligand>
        <name>NAD(+)</name>
        <dbReference type="ChEBI" id="CHEBI:57540"/>
    </ligand>
</feature>
<feature type="binding site" evidence="1">
    <location>
        <position position="78"/>
    </location>
    <ligand>
        <name>NAD(+)</name>
        <dbReference type="ChEBI" id="CHEBI:57540"/>
    </ligand>
</feature>
<feature type="binding site" evidence="1">
    <location>
        <position position="120"/>
    </location>
    <ligand>
        <name>NAD(+)</name>
        <dbReference type="ChEBI" id="CHEBI:57540"/>
    </ligand>
</feature>
<feature type="binding site" evidence="5">
    <location>
        <begin position="149"/>
        <end position="151"/>
    </location>
    <ligand>
        <name>D-glyceraldehyde 3-phosphate</name>
        <dbReference type="ChEBI" id="CHEBI:59776"/>
    </ligand>
</feature>
<feature type="binding site" evidence="5">
    <location>
        <position position="180"/>
    </location>
    <ligand>
        <name>D-glyceraldehyde 3-phosphate</name>
        <dbReference type="ChEBI" id="CHEBI:59776"/>
    </ligand>
</feature>
<feature type="binding site" evidence="5">
    <location>
        <begin position="209"/>
        <end position="210"/>
    </location>
    <ligand>
        <name>D-glyceraldehyde 3-phosphate</name>
        <dbReference type="ChEBI" id="CHEBI:59776"/>
    </ligand>
</feature>
<feature type="binding site" evidence="5">
    <location>
        <position position="232"/>
    </location>
    <ligand>
        <name>D-glyceraldehyde 3-phosphate</name>
        <dbReference type="ChEBI" id="CHEBI:59776"/>
    </ligand>
</feature>
<feature type="binding site" evidence="1">
    <location>
        <position position="314"/>
    </location>
    <ligand>
        <name>NAD(+)</name>
        <dbReference type="ChEBI" id="CHEBI:57540"/>
    </ligand>
</feature>
<feature type="site" description="Activates thiol group during catalysis" evidence="1">
    <location>
        <position position="177"/>
    </location>
</feature>
<feature type="modified residue" description="N6,N6-dimethyllysine" evidence="1">
    <location>
        <position position="3"/>
    </location>
</feature>
<feature type="modified residue" description="Deamidated asparagine" evidence="1">
    <location>
        <position position="7"/>
    </location>
</feature>
<feature type="modified residue" description="Phosphotyrosine" evidence="1">
    <location>
        <position position="40"/>
    </location>
</feature>
<feature type="modified residue" description="N6-acetyllysine" evidence="1">
    <location>
        <position position="59"/>
    </location>
</feature>
<feature type="modified residue" description="Deamidated asparagine" evidence="1">
    <location>
        <position position="62"/>
    </location>
</feature>
<feature type="modified residue" description="N6,N6-dimethyllysine" evidence="1">
    <location>
        <position position="64"/>
    </location>
</feature>
<feature type="modified residue" description="Deamidated asparagine" evidence="1">
    <location>
        <position position="68"/>
    </location>
</feature>
<feature type="modified residue" description="Phosphoserine" evidence="1">
    <location>
        <position position="120"/>
    </location>
</feature>
<feature type="modified residue" description="Phosphoserine" evidence="1">
    <location>
        <position position="146"/>
    </location>
</feature>
<feature type="modified residue" description="Deamidated asparagine" evidence="1">
    <location>
        <position position="147"/>
    </location>
</feature>
<feature type="modified residue" description="Phosphoserine" evidence="1">
    <location>
        <position position="149"/>
    </location>
</feature>
<feature type="modified residue" description="ADP-ribosylcysteine; by autocatalysis; in irreversibly inhibited form" evidence="2">
    <location>
        <position position="150"/>
    </location>
</feature>
<feature type="modified residue" description="Cysteine persulfide" evidence="4">
    <location>
        <position position="150"/>
    </location>
</feature>
<feature type="modified residue" description="S-(2-succinyl)cysteine" evidence="2">
    <location>
        <position position="150"/>
    </location>
</feature>
<feature type="modified residue" description="S-nitrosocysteine; in reversibly inhibited form" evidence="2">
    <location>
        <position position="150"/>
    </location>
</feature>
<feature type="modified residue" description="Phosphothreonine" evidence="1">
    <location>
        <position position="151"/>
    </location>
</feature>
<feature type="modified residue" description="Deamidated asparagine" evidence="1">
    <location>
        <position position="153"/>
    </location>
</feature>
<feature type="modified residue" description="Phosphothreonine" evidence="1">
    <location>
        <position position="175"/>
    </location>
</feature>
<feature type="modified residue" description="Phosphothreonine" evidence="1">
    <location>
        <position position="180"/>
    </location>
</feature>
<feature type="modified residue" description="Phosphothreonine" evidence="1">
    <location>
        <position position="182"/>
    </location>
</feature>
<feature type="modified residue" description="N6,N6-dimethyllysine; alternate" evidence="1">
    <location>
        <position position="192"/>
    </location>
</feature>
<feature type="modified residue" description="N6-acetyllysine; alternate" evidence="1">
    <location>
        <position position="192"/>
    </location>
</feature>
<feature type="modified residue" description="N6-malonyllysine; alternate" evidence="1">
    <location>
        <position position="192"/>
    </location>
</feature>
<feature type="modified residue" description="Phosphothreonine" evidence="1">
    <location>
        <position position="209"/>
    </location>
</feature>
<feature type="modified residue" description="N6,N6-dimethyllysine; alternate" evidence="1">
    <location>
        <position position="213"/>
    </location>
</feature>
<feature type="modified residue" description="N6-malonyllysine; alternate" evidence="1">
    <location>
        <position position="213"/>
    </location>
</feature>
<feature type="modified residue" description="N6-acetyllysine" evidence="1">
    <location>
        <position position="217"/>
    </location>
</feature>
<feature type="modified residue" description="Deamidated asparagine" evidence="1">
    <location>
        <position position="223"/>
    </location>
</feature>
<feature type="modified residue" description="N6,N6-dimethyllysine; alternate" evidence="1">
    <location>
        <position position="225"/>
    </location>
</feature>
<feature type="modified residue" description="N6-acetyllysine; alternate" evidence="1">
    <location>
        <position position="225"/>
    </location>
</feature>
<feature type="modified residue" description="Phosphothreonine" evidence="1">
    <location>
        <position position="227"/>
    </location>
</feature>
<feature type="modified residue" description="Phosphothreonine" evidence="1">
    <location>
        <position position="235"/>
    </location>
</feature>
<feature type="modified residue" description="Phosphoserine" evidence="1">
    <location>
        <position position="239"/>
    </location>
</feature>
<feature type="modified residue" description="S-(2-succinyl)cysteine" evidence="2">
    <location>
        <position position="245"/>
    </location>
</feature>
<feature type="modified residue" description="S-nitrosocysteine" evidence="1">
    <location>
        <position position="245"/>
    </location>
</feature>
<feature type="modified residue" description="N6-acetyllysine" evidence="1">
    <location>
        <position position="252"/>
    </location>
</feature>
<feature type="modified residue" description="N6,N6-dimethyllysine" evidence="1">
    <location>
        <position position="258"/>
    </location>
</feature>
<feature type="modified residue" description="N6,N6-dimethyllysine" evidence="1">
    <location>
        <position position="261"/>
    </location>
</feature>
<feature type="modified residue" description="Phosphoserine" evidence="1">
    <location>
        <position position="310"/>
    </location>
</feature>
<feature type="modified residue" description="Deamidated asparagine" evidence="1">
    <location>
        <position position="314"/>
    </location>
</feature>
<feature type="modified residue" description="Phosphoserine" evidence="1">
    <location>
        <position position="331"/>
    </location>
</feature>
<feature type="modified residue" description="N6,N6-dimethyllysine" evidence="1">
    <location>
        <position position="332"/>
    </location>
</feature>
<feature type="cross-link" description="Glycyl lysine isopeptide (Lys-Gly) (interchain with G-Cter in SUMO2)" evidence="1">
    <location>
        <position position="184"/>
    </location>
</feature>
<comment type="function">
    <text evidence="1 2">Has both glyceraldehyde-3-phosphate dehydrogenase and nitrosylase activities, thereby playing a role in glycolysis and nuclear functions, respectively. Glyceraldehyde-3-phosphate dehydrogenase is a key enzyme in glycolysis that catalyzes the first step of the pathway by converting D-glyceraldehyde 3-phosphate (G3P) into 3-phospho-D-glyceroyl phosphate (By similarity). Modulates the organization and assembly of the cytoskeleton. Facilitates the CHP1-dependent microtubule and membrane associations through its ability to stimulate the binding of CHP1 to microtubules (By similarity). Component of the GAIT (gamma interferon-activated inhibitor of translation) complex which mediates interferon-gamma-induced transcript-selective translation inhibition in inflammation processes. Upon interferon-gamma treatment assembles into the GAIT complex which binds to stem loop-containing GAIT elements in the 3'-UTR of diverse inflammatory mRNAs (such as ceruplasmin) and suppresses their translation. Also plays a role in innate immunity by promoting TNF-induced NF-kappa-B activation and type I interferon production, via interaction with TRAF2 and TRAF3, respectively (By similarity). Participates in nuclear events including transcription, RNA transport, DNA replication and apoptosis. Nuclear functions are probably due to the nitrosylase activity that mediates cysteine S-nitrosylation of nuclear target proteins such as SIRT1, HDAC2 and PRKDC (By similarity).</text>
</comment>
<comment type="catalytic activity">
    <reaction evidence="1 6">
        <text>D-glyceraldehyde 3-phosphate + phosphate + NAD(+) = (2R)-3-phospho-glyceroyl phosphate + NADH + H(+)</text>
        <dbReference type="Rhea" id="RHEA:10300"/>
        <dbReference type="ChEBI" id="CHEBI:15378"/>
        <dbReference type="ChEBI" id="CHEBI:43474"/>
        <dbReference type="ChEBI" id="CHEBI:57540"/>
        <dbReference type="ChEBI" id="CHEBI:57604"/>
        <dbReference type="ChEBI" id="CHEBI:57945"/>
        <dbReference type="ChEBI" id="CHEBI:59776"/>
        <dbReference type="EC" id="1.2.1.12"/>
    </reaction>
</comment>
<comment type="catalytic activity">
    <reaction evidence="2">
        <text>S-nitroso-L-cysteinyl-[GAPDH] + L-cysteinyl-[protein] = L-cysteinyl-[GAPDH] + S-nitroso-L-cysteinyl-[protein]</text>
        <dbReference type="Rhea" id="RHEA:66684"/>
        <dbReference type="Rhea" id="RHEA-COMP:10131"/>
        <dbReference type="Rhea" id="RHEA-COMP:17089"/>
        <dbReference type="Rhea" id="RHEA-COMP:17090"/>
        <dbReference type="Rhea" id="RHEA-COMP:17091"/>
        <dbReference type="ChEBI" id="CHEBI:29950"/>
        <dbReference type="ChEBI" id="CHEBI:149494"/>
    </reaction>
    <physiologicalReaction direction="left-to-right" evidence="2">
        <dbReference type="Rhea" id="RHEA:66685"/>
    </physiologicalReaction>
</comment>
<comment type="activity regulation">
    <text evidence="2">Glyceraldehyde-3-phosphate dehydrogenase activity is inhibited by fumarate, via the formation of S-(2-succinyl)cysteine residues.</text>
</comment>
<comment type="pathway">
    <text>Carbohydrate degradation; glycolysis; pyruvate from D-glyceraldehyde 3-phosphate: step 1/5.</text>
</comment>
<comment type="subunit">
    <text evidence="1 2 3">Homotetramer (By similarity). Interacts with TPPP; the interaction is direct (By similarity). Interacts (when S-nitrosylated) with SIAH1; leading to nuclear translocation. Interacts with RILPL1/GOSPEL, leading to prevent the interaction between GAPDH and SIAH1 and prevent nuclear translocation. Interacts with CHP1; the interaction increases the binding of CHP1 with microtubules. Associates with microtubules (By similarity). Interacts with EIF1AD, USP25, PRKCI and WARS1. Interacts with phosphorylated RPL13A; inhibited by oxidatively-modified low-densitity lipoprotein (LDL(ox)). Component of the GAIT complex. Interacts with FKBP6; leading to inhibit GAPDH catalytic activity. Interacts with TRAF2, promoting TRAF2 ubiquitination. Interacts with TRAF3, promoting TRAF3 ubiquitination (By similarity).</text>
</comment>
<comment type="subcellular location">
    <subcellularLocation>
        <location evidence="2">Cytoplasm</location>
        <location evidence="2">Cytosol</location>
    </subcellularLocation>
    <subcellularLocation>
        <location evidence="2">Cytoplasm</location>
        <location evidence="2">Cytoskeleton</location>
    </subcellularLocation>
    <subcellularLocation>
        <location evidence="2">Nucleus</location>
    </subcellularLocation>
    <text evidence="2">Translocates to the nucleus following S-nitrosylation and interaction with SIAH1, which contains a nuclear localization signal. Colocalizes with CHP1 to small punctate structures along the microtubules tracks.</text>
</comment>
<comment type="domain">
    <text evidence="1">The [IL]-x-C-x-x-[DE] motif is a proposed target motif for cysteine S-nitrosylation mediated by the iNOS-S100A8/A9 transnitrosylase complex.</text>
</comment>
<comment type="PTM">
    <text evidence="1">ISGylated.</text>
</comment>
<comment type="PTM">
    <text evidence="1 2">S-nitrosylation of Cys-150 leads to interaction with SIAH1, followed by translocation to the nucleus S-nitrosylation of Cys-245 is induced by interferon-gamma and LDL(ox) implicating the iNOS-S100A8/9 transnitrosylase complex and seems to prevent interaction with phosphorylated RPL13A and to interfere with GAIT complex activity (By similarity).</text>
</comment>
<comment type="PTM">
    <text evidence="4">Sulfhydration at Cys-150 increases catalytic activity.</text>
</comment>
<comment type="PTM">
    <text evidence="1">Oxidative stress can promote the formation of high molecular weight disulfide-linked GAPDH aggregates, through a process called nucleocytoplasmic coagulation.</text>
</comment>
<comment type="similarity">
    <text evidence="7">Belongs to the glyceraldehyde-3-phosphate dehydrogenase family.</text>
</comment>
<evidence type="ECO:0000250" key="1">
    <source>
        <dbReference type="UniProtKB" id="P04406"/>
    </source>
</evidence>
<evidence type="ECO:0000250" key="2">
    <source>
        <dbReference type="UniProtKB" id="P04797"/>
    </source>
</evidence>
<evidence type="ECO:0000250" key="3">
    <source>
        <dbReference type="UniProtKB" id="P10096"/>
    </source>
</evidence>
<evidence type="ECO:0000250" key="4">
    <source>
        <dbReference type="UniProtKB" id="P16858"/>
    </source>
</evidence>
<evidence type="ECO:0000250" key="5">
    <source>
        <dbReference type="UniProtKB" id="P22513"/>
    </source>
</evidence>
<evidence type="ECO:0000255" key="6">
    <source>
        <dbReference type="PROSITE-ProRule" id="PRU10009"/>
    </source>
</evidence>
<evidence type="ECO:0000305" key="7"/>
<name>G3P_SPECI</name>
<proteinExistence type="evidence at transcript level"/>
<reference key="1">
    <citation type="submission" date="2004-06" db="EMBL/GenBank/DDBJ databases">
        <title>Molecular cloning of glyceraldehyde-3-phosphate dehydrogenase (GAPDH) of Spermophilus citellus.</title>
        <authorList>
            <person name="Stieler J.T."/>
            <person name="Strijkstra A.M."/>
        </authorList>
    </citation>
    <scope>NUCLEOTIDE SEQUENCE [MRNA]</scope>
</reference>
<organism>
    <name type="scientific">Spermophilus citellus</name>
    <name type="common">European ground squirrel</name>
    <name type="synonym">Citellus citellus</name>
    <dbReference type="NCBI Taxonomy" id="9997"/>
    <lineage>
        <taxon>Eukaryota</taxon>
        <taxon>Metazoa</taxon>
        <taxon>Chordata</taxon>
        <taxon>Craniata</taxon>
        <taxon>Vertebrata</taxon>
        <taxon>Euteleostomi</taxon>
        <taxon>Mammalia</taxon>
        <taxon>Eutheria</taxon>
        <taxon>Euarchontoglires</taxon>
        <taxon>Glires</taxon>
        <taxon>Rodentia</taxon>
        <taxon>Sciuromorpha</taxon>
        <taxon>Sciuridae</taxon>
        <taxon>Xerinae</taxon>
        <taxon>Marmotini</taxon>
        <taxon>Spermophilus</taxon>
    </lineage>
</organism>
<dbReference type="EC" id="1.2.1.12" evidence="1"/>
<dbReference type="EC" id="2.6.99.-" evidence="2"/>
<dbReference type="EMBL" id="AY654895">
    <property type="protein sequence ID" value="AAV64182.1"/>
    <property type="molecule type" value="mRNA"/>
</dbReference>
<dbReference type="SMR" id="Q4KYY3"/>
<dbReference type="UniPathway" id="UPA00109">
    <property type="reaction ID" value="UER00184"/>
</dbReference>
<dbReference type="GO" id="GO:0005737">
    <property type="term" value="C:cytoplasm"/>
    <property type="evidence" value="ECO:0000250"/>
    <property type="project" value="UniProtKB"/>
</dbReference>
<dbReference type="GO" id="GO:0005829">
    <property type="term" value="C:cytosol"/>
    <property type="evidence" value="ECO:0000250"/>
    <property type="project" value="UniProtKB"/>
</dbReference>
<dbReference type="GO" id="GO:0097452">
    <property type="term" value="C:GAIT complex"/>
    <property type="evidence" value="ECO:0000250"/>
    <property type="project" value="UniProtKB"/>
</dbReference>
<dbReference type="GO" id="GO:0015630">
    <property type="term" value="C:microtubule cytoskeleton"/>
    <property type="evidence" value="ECO:0000250"/>
    <property type="project" value="UniProtKB"/>
</dbReference>
<dbReference type="GO" id="GO:0005634">
    <property type="term" value="C:nucleus"/>
    <property type="evidence" value="ECO:0000250"/>
    <property type="project" value="UniProtKB"/>
</dbReference>
<dbReference type="GO" id="GO:0004365">
    <property type="term" value="F:glyceraldehyde-3-phosphate dehydrogenase (NAD+) (phosphorylating) activity"/>
    <property type="evidence" value="ECO:0000250"/>
    <property type="project" value="UniProtKB"/>
</dbReference>
<dbReference type="GO" id="GO:0008017">
    <property type="term" value="F:microtubule binding"/>
    <property type="evidence" value="ECO:0000250"/>
    <property type="project" value="UniProtKB"/>
</dbReference>
<dbReference type="GO" id="GO:0051287">
    <property type="term" value="F:NAD binding"/>
    <property type="evidence" value="ECO:0007669"/>
    <property type="project" value="InterPro"/>
</dbReference>
<dbReference type="GO" id="GO:0050661">
    <property type="term" value="F:NADP binding"/>
    <property type="evidence" value="ECO:0007669"/>
    <property type="project" value="InterPro"/>
</dbReference>
<dbReference type="GO" id="GO:0035605">
    <property type="term" value="F:peptidyl-cysteine S-nitrosylase activity"/>
    <property type="evidence" value="ECO:0000250"/>
    <property type="project" value="UniProtKB"/>
</dbReference>
<dbReference type="GO" id="GO:0006006">
    <property type="term" value="P:glucose metabolic process"/>
    <property type="evidence" value="ECO:0007669"/>
    <property type="project" value="InterPro"/>
</dbReference>
<dbReference type="GO" id="GO:0006096">
    <property type="term" value="P:glycolytic process"/>
    <property type="evidence" value="ECO:0007669"/>
    <property type="project" value="UniProtKB-UniPathway"/>
</dbReference>
<dbReference type="GO" id="GO:0045087">
    <property type="term" value="P:innate immune response"/>
    <property type="evidence" value="ECO:0007669"/>
    <property type="project" value="UniProtKB-KW"/>
</dbReference>
<dbReference type="GO" id="GO:0000226">
    <property type="term" value="P:microtubule cytoskeleton organization"/>
    <property type="evidence" value="ECO:0000250"/>
    <property type="project" value="UniProtKB"/>
</dbReference>
<dbReference type="GO" id="GO:0051402">
    <property type="term" value="P:neuron apoptotic process"/>
    <property type="evidence" value="ECO:0000250"/>
    <property type="project" value="UniProtKB"/>
</dbReference>
<dbReference type="GO" id="GO:0035606">
    <property type="term" value="P:peptidyl-cysteine S-trans-nitrosylation"/>
    <property type="evidence" value="ECO:0000250"/>
    <property type="project" value="UniProtKB"/>
</dbReference>
<dbReference type="GO" id="GO:0043123">
    <property type="term" value="P:positive regulation of canonical NF-kappaB signal transduction"/>
    <property type="evidence" value="ECO:0000250"/>
    <property type="project" value="UniProtKB"/>
</dbReference>
<dbReference type="GO" id="GO:0032481">
    <property type="term" value="P:positive regulation of type I interferon production"/>
    <property type="evidence" value="ECO:0000250"/>
    <property type="project" value="UniProtKB"/>
</dbReference>
<dbReference type="GO" id="GO:0050821">
    <property type="term" value="P:protein stabilization"/>
    <property type="evidence" value="ECO:0000250"/>
    <property type="project" value="UniProtKB"/>
</dbReference>
<dbReference type="GO" id="GO:0006417">
    <property type="term" value="P:regulation of translation"/>
    <property type="evidence" value="ECO:0007669"/>
    <property type="project" value="UniProtKB-KW"/>
</dbReference>
<dbReference type="CDD" id="cd18126">
    <property type="entry name" value="GAPDH_I_C"/>
    <property type="match status" value="1"/>
</dbReference>
<dbReference type="CDD" id="cd05214">
    <property type="entry name" value="GAPDH_I_N"/>
    <property type="match status" value="1"/>
</dbReference>
<dbReference type="FunFam" id="3.30.360.10:FF:000001">
    <property type="entry name" value="Glyceraldehyde-3-phosphate dehydrogenase"/>
    <property type="match status" value="1"/>
</dbReference>
<dbReference type="FunFam" id="3.40.50.720:FF:001161">
    <property type="entry name" value="Glyceraldehyde-3-phosphate dehydrogenase"/>
    <property type="match status" value="1"/>
</dbReference>
<dbReference type="Gene3D" id="3.30.360.10">
    <property type="entry name" value="Dihydrodipicolinate Reductase, domain 2"/>
    <property type="match status" value="1"/>
</dbReference>
<dbReference type="Gene3D" id="3.40.50.720">
    <property type="entry name" value="NAD(P)-binding Rossmann-like Domain"/>
    <property type="match status" value="1"/>
</dbReference>
<dbReference type="InterPro" id="IPR020831">
    <property type="entry name" value="GlycerAld/Erythrose_P_DH"/>
</dbReference>
<dbReference type="InterPro" id="IPR020830">
    <property type="entry name" value="GlycerAld_3-P_DH_AS"/>
</dbReference>
<dbReference type="InterPro" id="IPR020829">
    <property type="entry name" value="GlycerAld_3-P_DH_cat"/>
</dbReference>
<dbReference type="InterPro" id="IPR020828">
    <property type="entry name" value="GlycerAld_3-P_DH_NAD(P)-bd"/>
</dbReference>
<dbReference type="InterPro" id="IPR006424">
    <property type="entry name" value="Glyceraldehyde-3-P_DH_1"/>
</dbReference>
<dbReference type="InterPro" id="IPR036291">
    <property type="entry name" value="NAD(P)-bd_dom_sf"/>
</dbReference>
<dbReference type="NCBIfam" id="TIGR01534">
    <property type="entry name" value="GAPDH-I"/>
    <property type="match status" value="1"/>
</dbReference>
<dbReference type="PANTHER" id="PTHR10836">
    <property type="entry name" value="GLYCERALDEHYDE 3-PHOSPHATE DEHYDROGENASE"/>
    <property type="match status" value="1"/>
</dbReference>
<dbReference type="PANTHER" id="PTHR10836:SF111">
    <property type="entry name" value="GLYCERALDEHYDE-3-PHOSPHATE DEHYDROGENASE"/>
    <property type="match status" value="1"/>
</dbReference>
<dbReference type="Pfam" id="PF02800">
    <property type="entry name" value="Gp_dh_C"/>
    <property type="match status" value="1"/>
</dbReference>
<dbReference type="Pfam" id="PF00044">
    <property type="entry name" value="Gp_dh_N"/>
    <property type="match status" value="1"/>
</dbReference>
<dbReference type="PIRSF" id="PIRSF000149">
    <property type="entry name" value="GAP_DH"/>
    <property type="match status" value="1"/>
</dbReference>
<dbReference type="PRINTS" id="PR00078">
    <property type="entry name" value="G3PDHDRGNASE"/>
</dbReference>
<dbReference type="SMART" id="SM00846">
    <property type="entry name" value="Gp_dh_N"/>
    <property type="match status" value="1"/>
</dbReference>
<dbReference type="SUPFAM" id="SSF55347">
    <property type="entry name" value="Glyceraldehyde-3-phosphate dehydrogenase-like, C-terminal domain"/>
    <property type="match status" value="1"/>
</dbReference>
<dbReference type="SUPFAM" id="SSF51735">
    <property type="entry name" value="NAD(P)-binding Rossmann-fold domains"/>
    <property type="match status" value="1"/>
</dbReference>
<dbReference type="PROSITE" id="PS00071">
    <property type="entry name" value="GAPDH"/>
    <property type="match status" value="1"/>
</dbReference>
<protein>
    <recommendedName>
        <fullName>Glyceraldehyde-3-phosphate dehydrogenase</fullName>
        <shortName>GAPDH</shortName>
        <ecNumber evidence="1">1.2.1.12</ecNumber>
    </recommendedName>
    <alternativeName>
        <fullName evidence="7">Peptidyl-cysteine S-nitrosylase GAPDH</fullName>
        <ecNumber evidence="2">2.6.99.-</ecNumber>
    </alternativeName>
</protein>
<keyword id="KW-0007">Acetylation</keyword>
<keyword id="KW-0013">ADP-ribosylation</keyword>
<keyword id="KW-0053">Apoptosis</keyword>
<keyword id="KW-0963">Cytoplasm</keyword>
<keyword id="KW-0206">Cytoskeleton</keyword>
<keyword id="KW-0324">Glycolysis</keyword>
<keyword id="KW-0391">Immunity</keyword>
<keyword id="KW-0399">Innate immunity</keyword>
<keyword id="KW-1017">Isopeptide bond</keyword>
<keyword id="KW-0488">Methylation</keyword>
<keyword id="KW-0520">NAD</keyword>
<keyword id="KW-0539">Nucleus</keyword>
<keyword id="KW-0560">Oxidoreductase</keyword>
<keyword id="KW-0597">Phosphoprotein</keyword>
<keyword id="KW-0702">S-nitrosylation</keyword>
<keyword id="KW-0808">Transferase</keyword>
<keyword id="KW-0810">Translation regulation</keyword>
<keyword id="KW-0832">Ubl conjugation</keyword>
<sequence>MVKVGVNGFGRIGRLVTRAAFNSGKVDIVAINDPFIDLNYMVYMFQYDSTHGKFHGTVKAENGKLVINGKSISIFQERDPANIKWGDAGAEYVVESTGVFTTMEKAGAHLKGGAKRVIISAPSADAPMFVMGVNHEKYDNSLKIVSNASCTTNCLAPLAKVIHDNFGIVEGLMTTVHAITATQKTVDGPSGKLWRDGRGAAQNIIPASTGAAKAVGKVIPELNGKLTGMAFRVPTPNVSVVDLTCRLEKAAKYDDIKKVVKQASEGPLKGILGYTEDQVVSCDFNSDTHSSTFDAGAGIALNDHFVKLISWYDNEFGYSNRVVDLMVHMASKE</sequence>